<feature type="chain" id="PRO_0000243484" description="Large ribosomal subunit protein bL12">
    <location>
        <begin position="1"/>
        <end position="123"/>
    </location>
</feature>
<comment type="function">
    <text evidence="1">Forms part of the ribosomal stalk which helps the ribosome interact with GTP-bound translation factors. Is thus essential for accurate translation.</text>
</comment>
<comment type="subunit">
    <text evidence="1">Homodimer. Part of the ribosomal stalk of the 50S ribosomal subunit. Forms a multimeric L10(L12)X complex, where L10 forms an elongated spine to which 2 to 4 L12 dimers bind in a sequential fashion. Binds GTP-bound translation factors.</text>
</comment>
<comment type="similarity">
    <text evidence="1">Belongs to the bacterial ribosomal protein bL12 family.</text>
</comment>
<organism>
    <name type="scientific">Rhodospirillum rubrum (strain ATCC 11170 / ATH 1.1.1 / DSM 467 / LMG 4362 / NCIMB 8255 / S1)</name>
    <dbReference type="NCBI Taxonomy" id="269796"/>
    <lineage>
        <taxon>Bacteria</taxon>
        <taxon>Pseudomonadati</taxon>
        <taxon>Pseudomonadota</taxon>
        <taxon>Alphaproteobacteria</taxon>
        <taxon>Rhodospirillales</taxon>
        <taxon>Rhodospirillaceae</taxon>
        <taxon>Rhodospirillum</taxon>
    </lineage>
</organism>
<protein>
    <recommendedName>
        <fullName evidence="1">Large ribosomal subunit protein bL12</fullName>
    </recommendedName>
    <alternativeName>
        <fullName evidence="2">50S ribosomal protein L7/L12</fullName>
    </alternativeName>
</protein>
<evidence type="ECO:0000255" key="1">
    <source>
        <dbReference type="HAMAP-Rule" id="MF_00368"/>
    </source>
</evidence>
<evidence type="ECO:0000305" key="2"/>
<name>RL7_RHORT</name>
<dbReference type="EMBL" id="CP000230">
    <property type="protein sequence ID" value="ABC23493.1"/>
    <property type="molecule type" value="Genomic_DNA"/>
</dbReference>
<dbReference type="RefSeq" id="WP_011390506.1">
    <property type="nucleotide sequence ID" value="NC_007643.1"/>
</dbReference>
<dbReference type="RefSeq" id="YP_427780.1">
    <property type="nucleotide sequence ID" value="NC_007643.1"/>
</dbReference>
<dbReference type="SMR" id="Q2RQV2"/>
<dbReference type="STRING" id="269796.Rru_A2696"/>
<dbReference type="EnsemblBacteria" id="ABC23493">
    <property type="protein sequence ID" value="ABC23493"/>
    <property type="gene ID" value="Rru_A2696"/>
</dbReference>
<dbReference type="KEGG" id="rru:Rru_A2696"/>
<dbReference type="PATRIC" id="fig|269796.9.peg.2804"/>
<dbReference type="eggNOG" id="COG0222">
    <property type="taxonomic scope" value="Bacteria"/>
</dbReference>
<dbReference type="HOGENOM" id="CLU_086499_3_0_5"/>
<dbReference type="PhylomeDB" id="Q2RQV2"/>
<dbReference type="Proteomes" id="UP000001929">
    <property type="component" value="Chromosome"/>
</dbReference>
<dbReference type="GO" id="GO:0022625">
    <property type="term" value="C:cytosolic large ribosomal subunit"/>
    <property type="evidence" value="ECO:0007669"/>
    <property type="project" value="TreeGrafter"/>
</dbReference>
<dbReference type="GO" id="GO:0003729">
    <property type="term" value="F:mRNA binding"/>
    <property type="evidence" value="ECO:0007669"/>
    <property type="project" value="TreeGrafter"/>
</dbReference>
<dbReference type="GO" id="GO:0003735">
    <property type="term" value="F:structural constituent of ribosome"/>
    <property type="evidence" value="ECO:0007669"/>
    <property type="project" value="InterPro"/>
</dbReference>
<dbReference type="GO" id="GO:0006412">
    <property type="term" value="P:translation"/>
    <property type="evidence" value="ECO:0007669"/>
    <property type="project" value="UniProtKB-UniRule"/>
</dbReference>
<dbReference type="CDD" id="cd00387">
    <property type="entry name" value="Ribosomal_L7_L12"/>
    <property type="match status" value="1"/>
</dbReference>
<dbReference type="FunFam" id="3.30.1390.10:FF:000001">
    <property type="entry name" value="50S ribosomal protein L7/L12"/>
    <property type="match status" value="1"/>
</dbReference>
<dbReference type="Gene3D" id="3.30.1390.10">
    <property type="match status" value="1"/>
</dbReference>
<dbReference type="Gene3D" id="1.20.5.710">
    <property type="entry name" value="Single helix bin"/>
    <property type="match status" value="1"/>
</dbReference>
<dbReference type="HAMAP" id="MF_00368">
    <property type="entry name" value="Ribosomal_bL12"/>
    <property type="match status" value="1"/>
</dbReference>
<dbReference type="InterPro" id="IPR000206">
    <property type="entry name" value="Ribosomal_bL12"/>
</dbReference>
<dbReference type="InterPro" id="IPR013823">
    <property type="entry name" value="Ribosomal_bL12_C"/>
</dbReference>
<dbReference type="InterPro" id="IPR014719">
    <property type="entry name" value="Ribosomal_bL12_C/ClpS-like"/>
</dbReference>
<dbReference type="InterPro" id="IPR008932">
    <property type="entry name" value="Ribosomal_bL12_oligo"/>
</dbReference>
<dbReference type="InterPro" id="IPR036235">
    <property type="entry name" value="Ribosomal_bL12_oligo_N_sf"/>
</dbReference>
<dbReference type="NCBIfam" id="TIGR00855">
    <property type="entry name" value="L12"/>
    <property type="match status" value="1"/>
</dbReference>
<dbReference type="PANTHER" id="PTHR45987">
    <property type="entry name" value="39S RIBOSOMAL PROTEIN L12"/>
    <property type="match status" value="1"/>
</dbReference>
<dbReference type="PANTHER" id="PTHR45987:SF4">
    <property type="entry name" value="LARGE RIBOSOMAL SUBUNIT PROTEIN BL12M"/>
    <property type="match status" value="1"/>
</dbReference>
<dbReference type="Pfam" id="PF00542">
    <property type="entry name" value="Ribosomal_L12"/>
    <property type="match status" value="1"/>
</dbReference>
<dbReference type="Pfam" id="PF16320">
    <property type="entry name" value="Ribosomal_L12_N"/>
    <property type="match status" value="1"/>
</dbReference>
<dbReference type="SUPFAM" id="SSF54736">
    <property type="entry name" value="ClpS-like"/>
    <property type="match status" value="1"/>
</dbReference>
<dbReference type="SUPFAM" id="SSF48300">
    <property type="entry name" value="Ribosomal protein L7/12, oligomerisation (N-terminal) domain"/>
    <property type="match status" value="1"/>
</dbReference>
<keyword id="KW-1185">Reference proteome</keyword>
<keyword id="KW-0687">Ribonucleoprotein</keyword>
<keyword id="KW-0689">Ribosomal protein</keyword>
<sequence>MADLAKLVDELSALTVLEAAELSKLLEEKWGVSAAAPVAVAAVAAEAAAPVEEKTEFDVILVDAGDKKINVIKEVRAITNLGLKEAKDLVEGAPKPVKEAVSKDEAASIKKKLEEAGAKVELK</sequence>
<accession>Q2RQV2</accession>
<reference key="1">
    <citation type="journal article" date="2011" name="Stand. Genomic Sci.">
        <title>Complete genome sequence of Rhodospirillum rubrum type strain (S1).</title>
        <authorList>
            <person name="Munk A.C."/>
            <person name="Copeland A."/>
            <person name="Lucas S."/>
            <person name="Lapidus A."/>
            <person name="Del Rio T.G."/>
            <person name="Barry K."/>
            <person name="Detter J.C."/>
            <person name="Hammon N."/>
            <person name="Israni S."/>
            <person name="Pitluck S."/>
            <person name="Brettin T."/>
            <person name="Bruce D."/>
            <person name="Han C."/>
            <person name="Tapia R."/>
            <person name="Gilna P."/>
            <person name="Schmutz J."/>
            <person name="Larimer F."/>
            <person name="Land M."/>
            <person name="Kyrpides N.C."/>
            <person name="Mavromatis K."/>
            <person name="Richardson P."/>
            <person name="Rohde M."/>
            <person name="Goeker M."/>
            <person name="Klenk H.P."/>
            <person name="Zhang Y."/>
            <person name="Roberts G.P."/>
            <person name="Reslewic S."/>
            <person name="Schwartz D.C."/>
        </authorList>
    </citation>
    <scope>NUCLEOTIDE SEQUENCE [LARGE SCALE GENOMIC DNA]</scope>
    <source>
        <strain>ATCC 11170 / ATH 1.1.1 / DSM 467 / LMG 4362 / NCIMB 8255 / S1</strain>
    </source>
</reference>
<gene>
    <name evidence="1" type="primary">rplL</name>
    <name type="ordered locus">Rru_A2696</name>
</gene>
<proteinExistence type="inferred from homology"/>